<comment type="function">
    <text evidence="1">Responsible for synthesis of pseudouridine from uracil-54 and uracil-55 in the psi GC loop of transfer RNAs.</text>
</comment>
<comment type="catalytic activity">
    <reaction evidence="1">
        <text>uridine(54) in tRNA = pseudouridine(54) in tRNA</text>
        <dbReference type="Rhea" id="RHEA:57876"/>
        <dbReference type="Rhea" id="RHEA-COMP:10193"/>
        <dbReference type="Rhea" id="RHEA-COMP:14141"/>
        <dbReference type="ChEBI" id="CHEBI:65314"/>
        <dbReference type="ChEBI" id="CHEBI:65315"/>
    </reaction>
</comment>
<comment type="catalytic activity">
    <reaction evidence="1">
        <text>uridine(55) in tRNA = pseudouridine(55) in tRNA</text>
        <dbReference type="Rhea" id="RHEA:42532"/>
        <dbReference type="Rhea" id="RHEA-COMP:10101"/>
        <dbReference type="Rhea" id="RHEA-COMP:10102"/>
        <dbReference type="ChEBI" id="CHEBI:65314"/>
        <dbReference type="ChEBI" id="CHEBI:65315"/>
        <dbReference type="EC" id="5.4.99.25"/>
    </reaction>
</comment>
<comment type="similarity">
    <text evidence="1">Belongs to the pseudouridine synthase Pus10 family.</text>
</comment>
<protein>
    <recommendedName>
        <fullName evidence="1">tRNA pseudouridine synthase Pus10</fullName>
        <ecNumber evidence="1">5.4.99.25</ecNumber>
    </recommendedName>
    <alternativeName>
        <fullName evidence="1">tRNA pseudouridine 54/55 synthase</fullName>
        <shortName evidence="1">Psi54/55 synthase</shortName>
    </alternativeName>
</protein>
<reference key="1">
    <citation type="journal article" date="2016" name="Stand. Genomic Sci.">
        <title>Complete genome sequence of the Antarctic Halorubrum lacusprofundi type strain ACAM 34.</title>
        <authorList>
            <person name="Anderson I.J."/>
            <person name="DasSarma P."/>
            <person name="Lucas S."/>
            <person name="Copeland A."/>
            <person name="Lapidus A."/>
            <person name="Del Rio T.G."/>
            <person name="Tice H."/>
            <person name="Dalin E."/>
            <person name="Bruce D.C."/>
            <person name="Goodwin L."/>
            <person name="Pitluck S."/>
            <person name="Sims D."/>
            <person name="Brettin T.S."/>
            <person name="Detter J.C."/>
            <person name="Han C.S."/>
            <person name="Larimer F."/>
            <person name="Hauser L."/>
            <person name="Land M."/>
            <person name="Ivanova N."/>
            <person name="Richardson P."/>
            <person name="Cavicchioli R."/>
            <person name="DasSarma S."/>
            <person name="Woese C.R."/>
            <person name="Kyrpides N.C."/>
        </authorList>
    </citation>
    <scope>NUCLEOTIDE SEQUENCE [LARGE SCALE GENOMIC DNA]</scope>
    <source>
        <strain>ATCC 49239 / DSM 5036 / JCM 8891 / ACAM 34</strain>
    </source>
</reference>
<keyword id="KW-0413">Isomerase</keyword>
<keyword id="KW-1185">Reference proteome</keyword>
<keyword id="KW-0694">RNA-binding</keyword>
<keyword id="KW-0819">tRNA processing</keyword>
<sequence>MDVLEVAARATGTGPVCDACLGRLVADRSFGLSNAERGSALRTSLALRDDEDYEPVETADCWVCEGRCTEFDEWAERAAEAVEDVEFATYNVGTRPPPLIEENEALLREEAGLDDDAGEPFKSEFNREVGKRFGRLTETEVSFDRPDVQFTIDLAEDEIDAKVNSTFVYGRYRKLERDIPQTEWPCRECKGSGRQGADPCDHCGGSGYLYDDSVEEYTAPVVEDVMDGTEATFHGAGREDVDALMLGTGRPFVIEVEEPRRRRVDTDRLQADINAFADGAVEVEGLRLATYDMVERVKEHDAAKRYRAEVAFDADVDADALAAAVEELEGTTVEQYTPNRVDHRRASITRERDVYEATAELDDARHAIVEIHGEGGLYIKELISGDEGRTEPSLAGLLGVGAEVTALDVVAVEGEDEPFEREEFFRE</sequence>
<dbReference type="EC" id="5.4.99.25" evidence="1"/>
<dbReference type="EMBL" id="CP001365">
    <property type="protein sequence ID" value="ACM57515.1"/>
    <property type="molecule type" value="Genomic_DNA"/>
</dbReference>
<dbReference type="RefSeq" id="WP_015910640.1">
    <property type="nucleotide sequence ID" value="NC_012029.1"/>
</dbReference>
<dbReference type="SMR" id="B9LQ94"/>
<dbReference type="GeneID" id="7399889"/>
<dbReference type="KEGG" id="hla:Hlac_1937"/>
<dbReference type="eggNOG" id="arCOG01015">
    <property type="taxonomic scope" value="Archaea"/>
</dbReference>
<dbReference type="HOGENOM" id="CLU_028780_2_0_2"/>
<dbReference type="Proteomes" id="UP000000740">
    <property type="component" value="Chromosome 1"/>
</dbReference>
<dbReference type="GO" id="GO:0000049">
    <property type="term" value="F:tRNA binding"/>
    <property type="evidence" value="ECO:0007669"/>
    <property type="project" value="InterPro"/>
</dbReference>
<dbReference type="GO" id="GO:0160148">
    <property type="term" value="F:tRNA pseudouridine(55) synthase activity"/>
    <property type="evidence" value="ECO:0007669"/>
    <property type="project" value="UniProtKB-EC"/>
</dbReference>
<dbReference type="GO" id="GO:0031119">
    <property type="term" value="P:tRNA pseudouridine synthesis"/>
    <property type="evidence" value="ECO:0007669"/>
    <property type="project" value="UniProtKB-UniRule"/>
</dbReference>
<dbReference type="FunFam" id="3.30.70.2510:FF:000001">
    <property type="entry name" value="tRNA pseudouridine synthase Pus10"/>
    <property type="match status" value="1"/>
</dbReference>
<dbReference type="Gene3D" id="3.30.70.2510">
    <property type="match status" value="1"/>
</dbReference>
<dbReference type="Gene3D" id="3.30.70.3190">
    <property type="match status" value="1"/>
</dbReference>
<dbReference type="HAMAP" id="MF_01893">
    <property type="entry name" value="Pus10_arch"/>
    <property type="match status" value="1"/>
</dbReference>
<dbReference type="InterPro" id="IPR036410">
    <property type="entry name" value="HSP_DnaJ_Cys-rich_dom_sf"/>
</dbReference>
<dbReference type="InterPro" id="IPR020103">
    <property type="entry name" value="PsdUridine_synth_cat_dom_sf"/>
</dbReference>
<dbReference type="InterPro" id="IPR005912">
    <property type="entry name" value="Pus10"/>
</dbReference>
<dbReference type="InterPro" id="IPR039894">
    <property type="entry name" value="Pus10-like"/>
</dbReference>
<dbReference type="InterPro" id="IPR048741">
    <property type="entry name" value="Pus10-like_C"/>
</dbReference>
<dbReference type="InterPro" id="IPR055174">
    <property type="entry name" value="Pus10_THUMP_arc"/>
</dbReference>
<dbReference type="NCBIfam" id="TIGR01213">
    <property type="entry name" value="pseudo_Pus10arc"/>
    <property type="match status" value="1"/>
</dbReference>
<dbReference type="PANTHER" id="PTHR21568">
    <property type="entry name" value="TRNA PSEUDOURIDINE SYNTHASE PUS10"/>
    <property type="match status" value="1"/>
</dbReference>
<dbReference type="PANTHER" id="PTHR21568:SF0">
    <property type="entry name" value="TRNA PSEUDOURIDINE SYNTHASE PUS10"/>
    <property type="match status" value="1"/>
</dbReference>
<dbReference type="Pfam" id="PF21238">
    <property type="entry name" value="Pus10_C"/>
    <property type="match status" value="1"/>
</dbReference>
<dbReference type="Pfam" id="PF22023">
    <property type="entry name" value="Pus10_THUMP_arc"/>
    <property type="match status" value="1"/>
</dbReference>
<dbReference type="SUPFAM" id="SSF57938">
    <property type="entry name" value="DnaJ/Hsp40 cysteine-rich domain"/>
    <property type="match status" value="1"/>
</dbReference>
<dbReference type="SUPFAM" id="SSF55120">
    <property type="entry name" value="Pseudouridine synthase"/>
    <property type="match status" value="1"/>
</dbReference>
<accession>B9LQ94</accession>
<evidence type="ECO:0000255" key="1">
    <source>
        <dbReference type="HAMAP-Rule" id="MF_01893"/>
    </source>
</evidence>
<organism>
    <name type="scientific">Halorubrum lacusprofundi (strain ATCC 49239 / DSM 5036 / JCM 8891 / ACAM 34)</name>
    <dbReference type="NCBI Taxonomy" id="416348"/>
    <lineage>
        <taxon>Archaea</taxon>
        <taxon>Methanobacteriati</taxon>
        <taxon>Methanobacteriota</taxon>
        <taxon>Stenosarchaea group</taxon>
        <taxon>Halobacteria</taxon>
        <taxon>Halobacteriales</taxon>
        <taxon>Haloferacaceae</taxon>
        <taxon>Halorubrum</taxon>
    </lineage>
</organism>
<proteinExistence type="inferred from homology"/>
<gene>
    <name evidence="1" type="primary">pus10</name>
    <name type="ordered locus">Hlac_1937</name>
</gene>
<feature type="chain" id="PRO_0000407385" description="tRNA pseudouridine synthase Pus10">
    <location>
        <begin position="1"/>
        <end position="427"/>
    </location>
</feature>
<feature type="active site" description="Nucleophile" evidence="1">
    <location>
        <position position="240"/>
    </location>
</feature>
<feature type="binding site" evidence="1">
    <location>
        <position position="306"/>
    </location>
    <ligand>
        <name>substrate</name>
    </ligand>
</feature>
<feature type="binding site" evidence="1">
    <location>
        <position position="378"/>
    </location>
    <ligand>
        <name>substrate</name>
    </ligand>
</feature>
<name>PUS10_HALLT</name>